<organism>
    <name type="scientific">Xanthomonas euvesicatoria pv. vesicatoria (strain 85-10)</name>
    <name type="common">Xanthomonas campestris pv. vesicatoria</name>
    <dbReference type="NCBI Taxonomy" id="316273"/>
    <lineage>
        <taxon>Bacteria</taxon>
        <taxon>Pseudomonadati</taxon>
        <taxon>Pseudomonadota</taxon>
        <taxon>Gammaproteobacteria</taxon>
        <taxon>Lysobacterales</taxon>
        <taxon>Lysobacteraceae</taxon>
        <taxon>Xanthomonas</taxon>
    </lineage>
</organism>
<name>COQ7_XANE5</name>
<keyword id="KW-1003">Cell membrane</keyword>
<keyword id="KW-0408">Iron</keyword>
<keyword id="KW-0472">Membrane</keyword>
<keyword id="KW-0479">Metal-binding</keyword>
<keyword id="KW-0503">Monooxygenase</keyword>
<keyword id="KW-0560">Oxidoreductase</keyword>
<keyword id="KW-0831">Ubiquinone biosynthesis</keyword>
<evidence type="ECO:0000255" key="1">
    <source>
        <dbReference type="HAMAP-Rule" id="MF_01658"/>
    </source>
</evidence>
<evidence type="ECO:0000305" key="2"/>
<gene>
    <name evidence="1" type="primary">coq7</name>
    <name type="ordered locus">XCV0522</name>
</gene>
<accession>Q3BYB0</accession>
<feature type="chain" id="PRO_0000338736" description="3-demethoxyubiquinol 3-hydroxylase">
    <location>
        <begin position="1"/>
        <end position="217"/>
    </location>
</feature>
<feature type="binding site" evidence="1">
    <location>
        <position position="66"/>
    </location>
    <ligand>
        <name>Fe cation</name>
        <dbReference type="ChEBI" id="CHEBI:24875"/>
        <label>1</label>
    </ligand>
</feature>
<feature type="binding site" evidence="1">
    <location>
        <position position="96"/>
    </location>
    <ligand>
        <name>Fe cation</name>
        <dbReference type="ChEBI" id="CHEBI:24875"/>
        <label>1</label>
    </ligand>
</feature>
<feature type="binding site" evidence="1">
    <location>
        <position position="96"/>
    </location>
    <ligand>
        <name>Fe cation</name>
        <dbReference type="ChEBI" id="CHEBI:24875"/>
        <label>2</label>
    </ligand>
</feature>
<feature type="binding site" evidence="1">
    <location>
        <position position="99"/>
    </location>
    <ligand>
        <name>Fe cation</name>
        <dbReference type="ChEBI" id="CHEBI:24875"/>
        <label>1</label>
    </ligand>
</feature>
<feature type="binding site" evidence="1">
    <location>
        <position position="148"/>
    </location>
    <ligand>
        <name>Fe cation</name>
        <dbReference type="ChEBI" id="CHEBI:24875"/>
        <label>2</label>
    </ligand>
</feature>
<feature type="binding site" evidence="1">
    <location>
        <position position="180"/>
    </location>
    <ligand>
        <name>Fe cation</name>
        <dbReference type="ChEBI" id="CHEBI:24875"/>
        <label>1</label>
    </ligand>
</feature>
<feature type="binding site" evidence="1">
    <location>
        <position position="180"/>
    </location>
    <ligand>
        <name>Fe cation</name>
        <dbReference type="ChEBI" id="CHEBI:24875"/>
        <label>2</label>
    </ligand>
</feature>
<feature type="binding site" evidence="1">
    <location>
        <position position="183"/>
    </location>
    <ligand>
        <name>Fe cation</name>
        <dbReference type="ChEBI" id="CHEBI:24875"/>
        <label>2</label>
    </ligand>
</feature>
<proteinExistence type="inferred from homology"/>
<reference key="1">
    <citation type="journal article" date="2005" name="J. Bacteriol.">
        <title>Insights into genome plasticity and pathogenicity of the plant pathogenic Bacterium Xanthomonas campestris pv. vesicatoria revealed by the complete genome sequence.</title>
        <authorList>
            <person name="Thieme F."/>
            <person name="Koebnik R."/>
            <person name="Bekel T."/>
            <person name="Berger C."/>
            <person name="Boch J."/>
            <person name="Buettner D."/>
            <person name="Caldana C."/>
            <person name="Gaigalat L."/>
            <person name="Goesmann A."/>
            <person name="Kay S."/>
            <person name="Kirchner O."/>
            <person name="Lanz C."/>
            <person name="Linke B."/>
            <person name="McHardy A.C."/>
            <person name="Meyer F."/>
            <person name="Mittenhuber G."/>
            <person name="Nies D.H."/>
            <person name="Niesbach-Kloesgen U."/>
            <person name="Patschkowski T."/>
            <person name="Rueckert C."/>
            <person name="Rupp O."/>
            <person name="Schneiker S."/>
            <person name="Schuster S.C."/>
            <person name="Vorhoelter F.J."/>
            <person name="Weber E."/>
            <person name="Puehler A."/>
            <person name="Bonas U."/>
            <person name="Bartels D."/>
            <person name="Kaiser O."/>
        </authorList>
    </citation>
    <scope>NUCLEOTIDE SEQUENCE [LARGE SCALE GENOMIC DNA]</scope>
    <source>
        <strain>85-10</strain>
    </source>
</reference>
<protein>
    <recommendedName>
        <fullName evidence="1">3-demethoxyubiquinol 3-hydroxylase</fullName>
        <shortName evidence="1">DMQ hydroxylase</shortName>
        <ecNumber evidence="1">1.14.99.60</ecNumber>
    </recommendedName>
    <alternativeName>
        <fullName evidence="1">2-nonaprenyl-3-methyl-6-methoxy-1,4-benzoquinol hydroxylase</fullName>
    </alternativeName>
</protein>
<dbReference type="EC" id="1.14.99.60" evidence="1"/>
<dbReference type="EMBL" id="AM039952">
    <property type="protein sequence ID" value="CAJ22153.1"/>
    <property type="status" value="ALT_INIT"/>
    <property type="molecule type" value="Genomic_DNA"/>
</dbReference>
<dbReference type="RefSeq" id="WP_031420846.1">
    <property type="nucleotide sequence ID" value="NZ_CP017190.1"/>
</dbReference>
<dbReference type="SMR" id="Q3BYB0"/>
<dbReference type="STRING" id="456327.BJD11_20265"/>
<dbReference type="KEGG" id="xcv:XCV0522"/>
<dbReference type="eggNOG" id="COG2941">
    <property type="taxonomic scope" value="Bacteria"/>
</dbReference>
<dbReference type="HOGENOM" id="CLU_088601_0_0_6"/>
<dbReference type="UniPathway" id="UPA00232"/>
<dbReference type="Proteomes" id="UP000007069">
    <property type="component" value="Chromosome"/>
</dbReference>
<dbReference type="GO" id="GO:0005886">
    <property type="term" value="C:plasma membrane"/>
    <property type="evidence" value="ECO:0007669"/>
    <property type="project" value="UniProtKB-SubCell"/>
</dbReference>
<dbReference type="GO" id="GO:0008682">
    <property type="term" value="F:3-demethoxyubiquinol 3-hydroxylase activity"/>
    <property type="evidence" value="ECO:0007669"/>
    <property type="project" value="UniProtKB-EC"/>
</dbReference>
<dbReference type="GO" id="GO:0046872">
    <property type="term" value="F:metal ion binding"/>
    <property type="evidence" value="ECO:0007669"/>
    <property type="project" value="UniProtKB-KW"/>
</dbReference>
<dbReference type="GO" id="GO:0006744">
    <property type="term" value="P:ubiquinone biosynthetic process"/>
    <property type="evidence" value="ECO:0007669"/>
    <property type="project" value="UniProtKB-UniRule"/>
</dbReference>
<dbReference type="CDD" id="cd01042">
    <property type="entry name" value="DMQH"/>
    <property type="match status" value="1"/>
</dbReference>
<dbReference type="FunFam" id="1.20.1260.10:FF:000013">
    <property type="entry name" value="2-nonaprenyl-3-methyl-6-methoxy-1,4-benzoquinol hydroxylase"/>
    <property type="match status" value="1"/>
</dbReference>
<dbReference type="Gene3D" id="1.20.1260.10">
    <property type="match status" value="1"/>
</dbReference>
<dbReference type="HAMAP" id="MF_01658">
    <property type="entry name" value="COQ7"/>
    <property type="match status" value="1"/>
</dbReference>
<dbReference type="InterPro" id="IPR047809">
    <property type="entry name" value="COQ7_proteobact"/>
</dbReference>
<dbReference type="InterPro" id="IPR012347">
    <property type="entry name" value="Ferritin-like"/>
</dbReference>
<dbReference type="InterPro" id="IPR009078">
    <property type="entry name" value="Ferritin-like_SF"/>
</dbReference>
<dbReference type="InterPro" id="IPR011566">
    <property type="entry name" value="Ubq_synth_Coq7"/>
</dbReference>
<dbReference type="NCBIfam" id="NF033656">
    <property type="entry name" value="DMQ_monoox_COQ7"/>
    <property type="match status" value="1"/>
</dbReference>
<dbReference type="PANTHER" id="PTHR11237:SF4">
    <property type="entry name" value="5-DEMETHOXYUBIQUINONE HYDROXYLASE, MITOCHONDRIAL"/>
    <property type="match status" value="1"/>
</dbReference>
<dbReference type="PANTHER" id="PTHR11237">
    <property type="entry name" value="COENZYME Q10 BIOSYNTHESIS PROTEIN 7"/>
    <property type="match status" value="1"/>
</dbReference>
<dbReference type="Pfam" id="PF03232">
    <property type="entry name" value="COQ7"/>
    <property type="match status" value="1"/>
</dbReference>
<dbReference type="SUPFAM" id="SSF47240">
    <property type="entry name" value="Ferritin-like"/>
    <property type="match status" value="1"/>
</dbReference>
<sequence>MTQISPTRLHSPLDRLLVEAQRALDTVFGNPPAERPNPAADTPDVVLDPEQRRHAAGLMRINHVGEVCAQGLYFGQAAVARDAHTQHHLLEAAQEETDHLAWCADRLHELDSRPSLFNPVWYAGSYALGALAGLRGDDWSLGFVVETERQVEAHLDEHLETLPQNDQRSRAILRVMKIDEARHADQAEQAGARPLPAPIPSAMALASKLMKTVAYRL</sequence>
<comment type="function">
    <text evidence="1">Catalyzes the hydroxylation of 2-nonaprenyl-3-methyl-6-methoxy-1,4-benzoquinol during ubiquinone biosynthesis.</text>
</comment>
<comment type="catalytic activity">
    <reaction evidence="1">
        <text>a 5-methoxy-2-methyl-3-(all-trans-polyprenyl)benzene-1,4-diol + AH2 + O2 = a 3-demethylubiquinol + A + H2O</text>
        <dbReference type="Rhea" id="RHEA:50908"/>
        <dbReference type="Rhea" id="RHEA-COMP:10859"/>
        <dbReference type="Rhea" id="RHEA-COMP:10914"/>
        <dbReference type="ChEBI" id="CHEBI:13193"/>
        <dbReference type="ChEBI" id="CHEBI:15377"/>
        <dbReference type="ChEBI" id="CHEBI:15379"/>
        <dbReference type="ChEBI" id="CHEBI:17499"/>
        <dbReference type="ChEBI" id="CHEBI:84167"/>
        <dbReference type="ChEBI" id="CHEBI:84422"/>
        <dbReference type="EC" id="1.14.99.60"/>
    </reaction>
</comment>
<comment type="cofactor">
    <cofactor evidence="1">
        <name>Fe cation</name>
        <dbReference type="ChEBI" id="CHEBI:24875"/>
    </cofactor>
    <text evidence="1">Binds 2 iron ions per subunit.</text>
</comment>
<comment type="pathway">
    <text evidence="1">Cofactor biosynthesis; ubiquinone biosynthesis.</text>
</comment>
<comment type="subcellular location">
    <subcellularLocation>
        <location evidence="1">Cell membrane</location>
        <topology evidence="1">Peripheral membrane protein</topology>
    </subcellularLocation>
</comment>
<comment type="similarity">
    <text evidence="1">Belongs to the COQ7 family.</text>
</comment>
<comment type="sequence caution" evidence="2">
    <conflict type="erroneous initiation">
        <sequence resource="EMBL-CDS" id="CAJ22153"/>
    </conflict>
</comment>